<proteinExistence type="inferred from homology"/>
<name>RSGA_SHIB3</name>
<reference key="1">
    <citation type="submission" date="2008-05" db="EMBL/GenBank/DDBJ databases">
        <title>Complete sequence of Shigella boydii serotype 18 strain BS512.</title>
        <authorList>
            <person name="Rasko D.A."/>
            <person name="Rosovitz M."/>
            <person name="Maurelli A.T."/>
            <person name="Myers G."/>
            <person name="Seshadri R."/>
            <person name="Cer R."/>
            <person name="Jiang L."/>
            <person name="Ravel J."/>
            <person name="Sebastian Y."/>
        </authorList>
    </citation>
    <scope>NUCLEOTIDE SEQUENCE [LARGE SCALE GENOMIC DNA]</scope>
    <source>
        <strain>CDC 3083-94 / BS512</strain>
    </source>
</reference>
<comment type="function">
    <text evidence="1">One of several proteins that assist in the late maturation steps of the functional core of the 30S ribosomal subunit. Helps release RbfA from mature subunits. May play a role in the assembly of ribosomal proteins into the subunit. Circularly permuted GTPase that catalyzes slow GTP hydrolysis, GTPase activity is stimulated by the 30S ribosomal subunit.</text>
</comment>
<comment type="cofactor">
    <cofactor evidence="1">
        <name>Zn(2+)</name>
        <dbReference type="ChEBI" id="CHEBI:29105"/>
    </cofactor>
    <text evidence="1">Binds 1 zinc ion per subunit.</text>
</comment>
<comment type="subunit">
    <text evidence="1">Monomer. Associates with 30S ribosomal subunit, binds 16S rRNA.</text>
</comment>
<comment type="subcellular location">
    <subcellularLocation>
        <location evidence="1">Cytoplasm</location>
    </subcellularLocation>
</comment>
<comment type="similarity">
    <text evidence="1">Belongs to the TRAFAC class YlqF/YawG GTPase family. RsgA subfamily.</text>
</comment>
<feature type="chain" id="PRO_1000188140" description="Small ribosomal subunit biogenesis GTPase RsgA">
    <location>
        <begin position="1"/>
        <end position="350"/>
    </location>
</feature>
<feature type="domain" description="CP-type G" evidence="2">
    <location>
        <begin position="104"/>
        <end position="273"/>
    </location>
</feature>
<feature type="region of interest" description="Disordered" evidence="3">
    <location>
        <begin position="1"/>
        <end position="33"/>
    </location>
</feature>
<feature type="compositionally biased region" description="Polar residues" evidence="3">
    <location>
        <begin position="1"/>
        <end position="17"/>
    </location>
</feature>
<feature type="binding site" evidence="1">
    <location>
        <begin position="160"/>
        <end position="163"/>
    </location>
    <ligand>
        <name>GTP</name>
        <dbReference type="ChEBI" id="CHEBI:37565"/>
    </ligand>
</feature>
<feature type="binding site" evidence="1">
    <location>
        <begin position="214"/>
        <end position="222"/>
    </location>
    <ligand>
        <name>GTP</name>
        <dbReference type="ChEBI" id="CHEBI:37565"/>
    </ligand>
</feature>
<feature type="binding site" evidence="1">
    <location>
        <position position="297"/>
    </location>
    <ligand>
        <name>Zn(2+)</name>
        <dbReference type="ChEBI" id="CHEBI:29105"/>
    </ligand>
</feature>
<feature type="binding site" evidence="1">
    <location>
        <position position="302"/>
    </location>
    <ligand>
        <name>Zn(2+)</name>
        <dbReference type="ChEBI" id="CHEBI:29105"/>
    </ligand>
</feature>
<feature type="binding site" evidence="1">
    <location>
        <position position="304"/>
    </location>
    <ligand>
        <name>Zn(2+)</name>
        <dbReference type="ChEBI" id="CHEBI:29105"/>
    </ligand>
</feature>
<feature type="binding site" evidence="1">
    <location>
        <position position="310"/>
    </location>
    <ligand>
        <name>Zn(2+)</name>
        <dbReference type="ChEBI" id="CHEBI:29105"/>
    </ligand>
</feature>
<dbReference type="EC" id="3.6.1.-" evidence="1"/>
<dbReference type="EMBL" id="CP001063">
    <property type="protein sequence ID" value="ACD08017.1"/>
    <property type="molecule type" value="Genomic_DNA"/>
</dbReference>
<dbReference type="RefSeq" id="WP_000041970.1">
    <property type="nucleotide sequence ID" value="NC_010658.1"/>
</dbReference>
<dbReference type="SMR" id="B2TY39"/>
<dbReference type="STRING" id="344609.SbBS512_E4693"/>
<dbReference type="GeneID" id="93777661"/>
<dbReference type="KEGG" id="sbc:SbBS512_E4693"/>
<dbReference type="HOGENOM" id="CLU_033617_2_0_6"/>
<dbReference type="Proteomes" id="UP000001030">
    <property type="component" value="Chromosome"/>
</dbReference>
<dbReference type="GO" id="GO:0005737">
    <property type="term" value="C:cytoplasm"/>
    <property type="evidence" value="ECO:0007669"/>
    <property type="project" value="UniProtKB-SubCell"/>
</dbReference>
<dbReference type="GO" id="GO:0005525">
    <property type="term" value="F:GTP binding"/>
    <property type="evidence" value="ECO:0007669"/>
    <property type="project" value="UniProtKB-UniRule"/>
</dbReference>
<dbReference type="GO" id="GO:0003924">
    <property type="term" value="F:GTPase activity"/>
    <property type="evidence" value="ECO:0007669"/>
    <property type="project" value="UniProtKB-UniRule"/>
</dbReference>
<dbReference type="GO" id="GO:0046872">
    <property type="term" value="F:metal ion binding"/>
    <property type="evidence" value="ECO:0007669"/>
    <property type="project" value="UniProtKB-KW"/>
</dbReference>
<dbReference type="GO" id="GO:0019843">
    <property type="term" value="F:rRNA binding"/>
    <property type="evidence" value="ECO:0007669"/>
    <property type="project" value="UniProtKB-KW"/>
</dbReference>
<dbReference type="GO" id="GO:0042274">
    <property type="term" value="P:ribosomal small subunit biogenesis"/>
    <property type="evidence" value="ECO:0007669"/>
    <property type="project" value="UniProtKB-UniRule"/>
</dbReference>
<dbReference type="CDD" id="cd01854">
    <property type="entry name" value="YjeQ_EngC"/>
    <property type="match status" value="1"/>
</dbReference>
<dbReference type="FunFam" id="1.10.40.50:FF:000001">
    <property type="entry name" value="Small ribosomal subunit biogenesis GTPase RsgA"/>
    <property type="match status" value="1"/>
</dbReference>
<dbReference type="FunFam" id="2.40.50.140:FF:000122">
    <property type="entry name" value="Small ribosomal subunit biogenesis GTPase RsgA"/>
    <property type="match status" value="1"/>
</dbReference>
<dbReference type="FunFam" id="3.40.50.300:FF:000389">
    <property type="entry name" value="Small ribosomal subunit biogenesis GTPase RsgA"/>
    <property type="match status" value="1"/>
</dbReference>
<dbReference type="Gene3D" id="2.40.50.140">
    <property type="entry name" value="Nucleic acid-binding proteins"/>
    <property type="match status" value="1"/>
</dbReference>
<dbReference type="Gene3D" id="3.40.50.300">
    <property type="entry name" value="P-loop containing nucleotide triphosphate hydrolases"/>
    <property type="match status" value="1"/>
</dbReference>
<dbReference type="Gene3D" id="1.10.40.50">
    <property type="entry name" value="Probable gtpase engc, domain 3"/>
    <property type="match status" value="1"/>
</dbReference>
<dbReference type="HAMAP" id="MF_01820">
    <property type="entry name" value="GTPase_RsgA"/>
    <property type="match status" value="1"/>
</dbReference>
<dbReference type="InterPro" id="IPR030378">
    <property type="entry name" value="G_CP_dom"/>
</dbReference>
<dbReference type="InterPro" id="IPR012340">
    <property type="entry name" value="NA-bd_OB-fold"/>
</dbReference>
<dbReference type="InterPro" id="IPR027417">
    <property type="entry name" value="P-loop_NTPase"/>
</dbReference>
<dbReference type="InterPro" id="IPR004881">
    <property type="entry name" value="Ribosome_biogen_GTPase_RsgA"/>
</dbReference>
<dbReference type="InterPro" id="IPR010914">
    <property type="entry name" value="RsgA_GTPase_dom"/>
</dbReference>
<dbReference type="NCBIfam" id="NF008931">
    <property type="entry name" value="PRK12288.1"/>
    <property type="match status" value="1"/>
</dbReference>
<dbReference type="NCBIfam" id="TIGR00157">
    <property type="entry name" value="ribosome small subunit-dependent GTPase A"/>
    <property type="match status" value="1"/>
</dbReference>
<dbReference type="PANTHER" id="PTHR32120">
    <property type="entry name" value="SMALL RIBOSOMAL SUBUNIT BIOGENESIS GTPASE RSGA"/>
    <property type="match status" value="1"/>
</dbReference>
<dbReference type="PANTHER" id="PTHR32120:SF11">
    <property type="entry name" value="SMALL RIBOSOMAL SUBUNIT BIOGENESIS GTPASE RSGA 1, MITOCHONDRIAL-RELATED"/>
    <property type="match status" value="1"/>
</dbReference>
<dbReference type="Pfam" id="PF03193">
    <property type="entry name" value="RsgA_GTPase"/>
    <property type="match status" value="1"/>
</dbReference>
<dbReference type="SUPFAM" id="SSF52540">
    <property type="entry name" value="P-loop containing nucleoside triphosphate hydrolases"/>
    <property type="match status" value="1"/>
</dbReference>
<dbReference type="PROSITE" id="PS50936">
    <property type="entry name" value="ENGC_GTPASE"/>
    <property type="match status" value="1"/>
</dbReference>
<dbReference type="PROSITE" id="PS51721">
    <property type="entry name" value="G_CP"/>
    <property type="match status" value="1"/>
</dbReference>
<organism>
    <name type="scientific">Shigella boydii serotype 18 (strain CDC 3083-94 / BS512)</name>
    <dbReference type="NCBI Taxonomy" id="344609"/>
    <lineage>
        <taxon>Bacteria</taxon>
        <taxon>Pseudomonadati</taxon>
        <taxon>Pseudomonadota</taxon>
        <taxon>Gammaproteobacteria</taxon>
        <taxon>Enterobacterales</taxon>
        <taxon>Enterobacteriaceae</taxon>
        <taxon>Shigella</taxon>
    </lineage>
</organism>
<protein>
    <recommendedName>
        <fullName evidence="1">Small ribosomal subunit biogenesis GTPase RsgA</fullName>
        <ecNumber evidence="1">3.6.1.-</ecNumber>
    </recommendedName>
</protein>
<accession>B2TY39</accession>
<evidence type="ECO:0000255" key="1">
    <source>
        <dbReference type="HAMAP-Rule" id="MF_01820"/>
    </source>
</evidence>
<evidence type="ECO:0000255" key="2">
    <source>
        <dbReference type="PROSITE-ProRule" id="PRU01058"/>
    </source>
</evidence>
<evidence type="ECO:0000256" key="3">
    <source>
        <dbReference type="SAM" id="MobiDB-lite"/>
    </source>
</evidence>
<gene>
    <name evidence="1" type="primary">rsgA</name>
    <name type="ordered locus">SbBS512_E4693</name>
</gene>
<sequence length="350" mass="39179">MSKNKLSKGQQRRVNANHQRRLKTSKEKPDYDDNLFGEPDEGIVISRFGMHADVESADGDVHRCNIRRTIRSLVTGDRVVWRPGKPAAEGVNVKGIVEAVHERTSVLTRPDFYDGVKPIAANIDQIVIVSAILPELSLNIIDRYLVACETLQIEPIIVLNKIDLLDDEGMAFVNEQMDIYRNIGYRVLMVSSHTQDGLKPLEEALTGRISIFAGQSGVGKSSLLNALLGLQKEILTNDVSDNSGLGQHTTTAARLYHFPHGGDVIDSPGVREFGLWHLEPEQITQGFVEFHDYLGLCKYRDCKHDTDPGCAIREAVEEGKIAETRFENYHRILESMAQVKTRKNFSDTDD</sequence>
<keyword id="KW-0963">Cytoplasm</keyword>
<keyword id="KW-0342">GTP-binding</keyword>
<keyword id="KW-0378">Hydrolase</keyword>
<keyword id="KW-0479">Metal-binding</keyword>
<keyword id="KW-0547">Nucleotide-binding</keyword>
<keyword id="KW-1185">Reference proteome</keyword>
<keyword id="KW-0690">Ribosome biogenesis</keyword>
<keyword id="KW-0694">RNA-binding</keyword>
<keyword id="KW-0699">rRNA-binding</keyword>
<keyword id="KW-0862">Zinc</keyword>